<dbReference type="EC" id="3.1.1.-"/>
<dbReference type="EMBL" id="DQ274494">
    <property type="protein sequence ID" value="ABC55694.1"/>
    <property type="molecule type" value="mRNA"/>
</dbReference>
<dbReference type="SMR" id="Q2MY44"/>
<dbReference type="InParanoid" id="Q2MY44"/>
<dbReference type="Proteomes" id="UP000011115">
    <property type="component" value="Unassembled WGS sequence"/>
</dbReference>
<dbReference type="ExpressionAtlas" id="Q2MY44">
    <property type="expression patterns" value="baseline and differential"/>
</dbReference>
<dbReference type="GO" id="GO:0005773">
    <property type="term" value="C:vacuole"/>
    <property type="evidence" value="ECO:0007669"/>
    <property type="project" value="UniProtKB-SubCell"/>
</dbReference>
<dbReference type="GO" id="GO:0047372">
    <property type="term" value="F:monoacylglycerol lipase activity"/>
    <property type="evidence" value="ECO:0000318"/>
    <property type="project" value="GO_Central"/>
</dbReference>
<dbReference type="GO" id="GO:0045735">
    <property type="term" value="F:nutrient reservoir activity"/>
    <property type="evidence" value="ECO:0007669"/>
    <property type="project" value="UniProtKB-KW"/>
</dbReference>
<dbReference type="GO" id="GO:0004620">
    <property type="term" value="F:phospholipase activity"/>
    <property type="evidence" value="ECO:0000318"/>
    <property type="project" value="GO_Central"/>
</dbReference>
<dbReference type="GO" id="GO:0006952">
    <property type="term" value="P:defense response"/>
    <property type="evidence" value="ECO:0007669"/>
    <property type="project" value="UniProtKB-KW"/>
</dbReference>
<dbReference type="GO" id="GO:0016042">
    <property type="term" value="P:lipid catabolic process"/>
    <property type="evidence" value="ECO:0007669"/>
    <property type="project" value="UniProtKB-KW"/>
</dbReference>
<dbReference type="Gene3D" id="3.40.1090.10">
    <property type="entry name" value="Cytosolic phospholipase A2 catalytic domain"/>
    <property type="match status" value="1"/>
</dbReference>
<dbReference type="InterPro" id="IPR016035">
    <property type="entry name" value="Acyl_Trfase/lysoPLipase"/>
</dbReference>
<dbReference type="InterPro" id="IPR002641">
    <property type="entry name" value="PNPLA_dom"/>
</dbReference>
<dbReference type="PANTHER" id="PTHR32176:SF85">
    <property type="entry name" value="PATATIN GROUP D-2"/>
    <property type="match status" value="1"/>
</dbReference>
<dbReference type="PANTHER" id="PTHR32176">
    <property type="entry name" value="XYLOSE ISOMERASE"/>
    <property type="match status" value="1"/>
</dbReference>
<dbReference type="Pfam" id="PF01734">
    <property type="entry name" value="Patatin"/>
    <property type="match status" value="1"/>
</dbReference>
<dbReference type="SUPFAM" id="SSF52151">
    <property type="entry name" value="FabD/lysophospholipase-like"/>
    <property type="match status" value="1"/>
</dbReference>
<dbReference type="PROSITE" id="PS51635">
    <property type="entry name" value="PNPLA"/>
    <property type="match status" value="1"/>
</dbReference>
<reference key="1">
    <citation type="journal article" date="2006" name="Genetics">
        <title>Structural diversity and differential transcription of the patatin multicopy gene family during potato tuber development.</title>
        <authorList>
            <person name="Stupar R.M."/>
            <person name="Beaubien K.A."/>
            <person name="Jin W."/>
            <person name="Song J."/>
            <person name="Lee M.-K."/>
            <person name="Wu C."/>
            <person name="Zhang H.-B."/>
            <person name="Han B."/>
            <person name="Jiang J."/>
        </authorList>
    </citation>
    <scope>NUCLEOTIDE SEQUENCE [MRNA]</scope>
    <scope>DEVELOPMENTAL STAGE</scope>
    <scope>TISSUE SPECIFICITY</scope>
    <source>
        <strain>cv. Kennebec</strain>
    </source>
</reference>
<keyword id="KW-0325">Glycoprotein</keyword>
<keyword id="KW-0378">Hydrolase</keyword>
<keyword id="KW-0442">Lipid degradation</keyword>
<keyword id="KW-0443">Lipid metabolism</keyword>
<keyword id="KW-0611">Plant defense</keyword>
<keyword id="KW-1185">Reference proteome</keyword>
<keyword id="KW-0732">Signal</keyword>
<keyword id="KW-0758">Storage protein</keyword>
<keyword id="KW-0926">Vacuole</keyword>
<feature type="signal peptide" evidence="2">
    <location>
        <begin position="1"/>
        <end position="23"/>
    </location>
</feature>
<feature type="chain" id="PRO_0000296693" description="Patatin-07">
    <location>
        <begin position="24"/>
        <end position="386"/>
    </location>
</feature>
<feature type="domain" description="PNPLA" evidence="3">
    <location>
        <begin position="32"/>
        <end position="229"/>
    </location>
</feature>
<feature type="short sequence motif" description="GXGXXG" evidence="3">
    <location>
        <begin position="36"/>
        <end position="41"/>
    </location>
</feature>
<feature type="short sequence motif" description="GXSXG" evidence="3">
    <location>
        <begin position="75"/>
        <end position="79"/>
    </location>
</feature>
<feature type="short sequence motif" description="DGA/G" evidence="3">
    <location>
        <begin position="215"/>
        <end position="217"/>
    </location>
</feature>
<feature type="active site" description="Nucleophile" evidence="3">
    <location>
        <position position="77"/>
    </location>
</feature>
<feature type="active site" description="Proton acceptor" evidence="3">
    <location>
        <position position="215"/>
    </location>
</feature>
<feature type="glycosylation site" description="N-linked (GlcNAc...) asparagine" evidence="2">
    <location>
        <position position="115"/>
    </location>
</feature>
<feature type="glycosylation site" description="N-linked (GlcNAc...) asparagine" evidence="2">
    <location>
        <position position="202"/>
    </location>
</feature>
<proteinExistence type="evidence at transcript level"/>
<accession>Q2MY44</accession>
<evidence type="ECO:0000250" key="1"/>
<evidence type="ECO:0000255" key="2"/>
<evidence type="ECO:0000255" key="3">
    <source>
        <dbReference type="PROSITE-ProRule" id="PRU01161"/>
    </source>
</evidence>
<evidence type="ECO:0000269" key="4">
    <source>
    </source>
</evidence>
<evidence type="ECO:0000305" key="5"/>
<sequence>MATTKSFLILFFMILATTSSTCAKLEEMVTVLSIDGGGIKGIIPAIILEFLEGQLQEVDNNKDARLADYFDVIGGTSTGGLLTAMITTPNENNRPFAAAKDIVPFYFEHGPHIFNYSGSIFGPRYDGKYLMQVLQEKLGETRVHQALTEVAISSFDIKTNKPVIFTKSNLAKSPELDAKMSDICYSTAAAPTYFPPHYFATNTSNGDKYEFNLVDGAVATVADPALLSVSVATRRAEEDPAFASIRSLNYKQLLLLSLGTGTNSEFDKTHTAQETAKWGALQWMLVIQQMTEAASSYMTDYYLSTVFQDLHSQNNYLRVQENALTGTTTKADDASEANMELLVQVGENLLKKPVSKDNPETYEEALKRFAKLLSDRKKFRANKASY</sequence>
<comment type="function">
    <text evidence="1">Probable lipolytic acyl hydrolase (LAH), an activity which is thought to be involved in the response of tubers to pathogens.</text>
</comment>
<comment type="subcellular location">
    <subcellularLocation>
        <location evidence="1">Vacuole</location>
    </subcellularLocation>
</comment>
<comment type="tissue specificity">
    <text evidence="4">Tuber.</text>
</comment>
<comment type="developmental stage">
    <text evidence="4">Accumulates progressively during tuber formation from stolon.</text>
</comment>
<comment type="domain">
    <text>The nitrogen atoms of the two glycine residues in the GGXR motif define the oxyanion hole, and stabilize the oxyanion that forms during the nucleophilic attack by the catalytic serine during substrate cleavage.</text>
</comment>
<comment type="miscellaneous">
    <text>Patatin have a dual role as a somatic storage protein and as an enzyme involved in host resistance.</text>
</comment>
<comment type="similarity">
    <text evidence="5">Belongs to the patatin family.</text>
</comment>
<protein>
    <recommendedName>
        <fullName>Patatin-07</fullName>
        <ecNumber>3.1.1.-</ecNumber>
    </recommendedName>
</protein>
<name>PAT07_SOLTU</name>
<organism>
    <name type="scientific">Solanum tuberosum</name>
    <name type="common">Potato</name>
    <dbReference type="NCBI Taxonomy" id="4113"/>
    <lineage>
        <taxon>Eukaryota</taxon>
        <taxon>Viridiplantae</taxon>
        <taxon>Streptophyta</taxon>
        <taxon>Embryophyta</taxon>
        <taxon>Tracheophyta</taxon>
        <taxon>Spermatophyta</taxon>
        <taxon>Magnoliopsida</taxon>
        <taxon>eudicotyledons</taxon>
        <taxon>Gunneridae</taxon>
        <taxon>Pentapetalae</taxon>
        <taxon>asterids</taxon>
        <taxon>lamiids</taxon>
        <taxon>Solanales</taxon>
        <taxon>Solanaceae</taxon>
        <taxon>Solanoideae</taxon>
        <taxon>Solaneae</taxon>
        <taxon>Solanum</taxon>
    </lineage>
</organism>